<organism>
    <name type="scientific">Rhinolophus ferrumequinum</name>
    <name type="common">Greater horseshoe bat</name>
    <dbReference type="NCBI Taxonomy" id="59479"/>
    <lineage>
        <taxon>Eukaryota</taxon>
        <taxon>Metazoa</taxon>
        <taxon>Chordata</taxon>
        <taxon>Craniata</taxon>
        <taxon>Vertebrata</taxon>
        <taxon>Euteleostomi</taxon>
        <taxon>Mammalia</taxon>
        <taxon>Eutheria</taxon>
        <taxon>Laurasiatheria</taxon>
        <taxon>Chiroptera</taxon>
        <taxon>Yinpterochiroptera</taxon>
        <taxon>Rhinolophoidea</taxon>
        <taxon>Rhinolophidae</taxon>
        <taxon>Rhinolophinae</taxon>
        <taxon>Rhinolophus</taxon>
    </lineage>
</organism>
<gene>
    <name type="primary">WNT2</name>
</gene>
<accession>Q2IBB5</accession>
<dbReference type="EMBL" id="DP000028">
    <property type="protein sequence ID" value="ABC87478.1"/>
    <property type="molecule type" value="Genomic_DNA"/>
</dbReference>
<dbReference type="RefSeq" id="XP_032954582.1">
    <property type="nucleotide sequence ID" value="XM_033098691.1"/>
</dbReference>
<dbReference type="SMR" id="Q2IBB5"/>
<dbReference type="FunCoup" id="Q2IBB5">
    <property type="interactions" value="201"/>
</dbReference>
<dbReference type="GlyCosmos" id="Q2IBB5">
    <property type="glycosylation" value="1 site, No reported glycans"/>
</dbReference>
<dbReference type="Ensembl" id="ENSRFET00010030511.1">
    <property type="protein sequence ID" value="ENSRFEP00010028108.1"/>
    <property type="gene ID" value="ENSRFEG00010018681.1"/>
</dbReference>
<dbReference type="GeneID" id="117018023"/>
<dbReference type="GeneTree" id="ENSGT00940000159231"/>
<dbReference type="InParanoid" id="Q2IBB5"/>
<dbReference type="OMA" id="ITRMTKC"/>
<dbReference type="OrthoDB" id="5945655at2759"/>
<dbReference type="Proteomes" id="UP000472240">
    <property type="component" value="Chromosome 26"/>
</dbReference>
<dbReference type="GO" id="GO:0005737">
    <property type="term" value="C:cytoplasm"/>
    <property type="evidence" value="ECO:0007669"/>
    <property type="project" value="Ensembl"/>
</dbReference>
<dbReference type="GO" id="GO:0005615">
    <property type="term" value="C:extracellular space"/>
    <property type="evidence" value="ECO:0007669"/>
    <property type="project" value="TreeGrafter"/>
</dbReference>
<dbReference type="GO" id="GO:0005125">
    <property type="term" value="F:cytokine activity"/>
    <property type="evidence" value="ECO:0007669"/>
    <property type="project" value="Ensembl"/>
</dbReference>
<dbReference type="GO" id="GO:0005109">
    <property type="term" value="F:frizzled binding"/>
    <property type="evidence" value="ECO:0007669"/>
    <property type="project" value="Ensembl"/>
</dbReference>
<dbReference type="GO" id="GO:0055009">
    <property type="term" value="P:atrial cardiac muscle tissue morphogenesis"/>
    <property type="evidence" value="ECO:0007669"/>
    <property type="project" value="Ensembl"/>
</dbReference>
<dbReference type="GO" id="GO:0060070">
    <property type="term" value="P:canonical Wnt signaling pathway"/>
    <property type="evidence" value="ECO:0007669"/>
    <property type="project" value="Ensembl"/>
</dbReference>
<dbReference type="GO" id="GO:0060317">
    <property type="term" value="P:cardiac epithelial to mesenchymal transition"/>
    <property type="evidence" value="ECO:0007669"/>
    <property type="project" value="Ensembl"/>
</dbReference>
<dbReference type="GO" id="GO:0060038">
    <property type="term" value="P:cardiac muscle cell proliferation"/>
    <property type="evidence" value="ECO:0007669"/>
    <property type="project" value="Ensembl"/>
</dbReference>
<dbReference type="GO" id="GO:0045165">
    <property type="term" value="P:cell fate commitment"/>
    <property type="evidence" value="ECO:0007669"/>
    <property type="project" value="TreeGrafter"/>
</dbReference>
<dbReference type="GO" id="GO:0033278">
    <property type="term" value="P:cell proliferation in midbrain"/>
    <property type="evidence" value="ECO:0007669"/>
    <property type="project" value="Ensembl"/>
</dbReference>
<dbReference type="GO" id="GO:0007267">
    <property type="term" value="P:cell-cell signaling"/>
    <property type="evidence" value="ECO:0007669"/>
    <property type="project" value="Ensembl"/>
</dbReference>
<dbReference type="GO" id="GO:0071560">
    <property type="term" value="P:cellular response to transforming growth factor beta stimulus"/>
    <property type="evidence" value="ECO:0007669"/>
    <property type="project" value="Ensembl"/>
</dbReference>
<dbReference type="GO" id="GO:0060502">
    <property type="term" value="P:epithelial cell proliferation involved in lung morphogenesis"/>
    <property type="evidence" value="ECO:0007669"/>
    <property type="project" value="Ensembl"/>
</dbReference>
<dbReference type="GO" id="GO:0060716">
    <property type="term" value="P:labyrinthine layer blood vessel development"/>
    <property type="evidence" value="ECO:0007669"/>
    <property type="project" value="Ensembl"/>
</dbReference>
<dbReference type="GO" id="GO:0060492">
    <property type="term" value="P:lung induction"/>
    <property type="evidence" value="ECO:0007669"/>
    <property type="project" value="Ensembl"/>
</dbReference>
<dbReference type="GO" id="GO:0061180">
    <property type="term" value="P:mammary gland epithelium development"/>
    <property type="evidence" value="ECO:0007669"/>
    <property type="project" value="Ensembl"/>
</dbReference>
<dbReference type="GO" id="GO:0010463">
    <property type="term" value="P:mesenchymal cell proliferation"/>
    <property type="evidence" value="ECO:0007669"/>
    <property type="project" value="Ensembl"/>
</dbReference>
<dbReference type="GO" id="GO:1904948">
    <property type="term" value="P:midbrain dopaminergic neuron differentiation"/>
    <property type="evidence" value="ECO:0007669"/>
    <property type="project" value="Ensembl"/>
</dbReference>
<dbReference type="GO" id="GO:0060045">
    <property type="term" value="P:positive regulation of cardiac muscle cell proliferation"/>
    <property type="evidence" value="ECO:0007669"/>
    <property type="project" value="Ensembl"/>
</dbReference>
<dbReference type="GO" id="GO:0060501">
    <property type="term" value="P:positive regulation of epithelial cell proliferation involved in lung morphogenesis"/>
    <property type="evidence" value="ECO:0007669"/>
    <property type="project" value="Ensembl"/>
</dbReference>
<dbReference type="GO" id="GO:0048146">
    <property type="term" value="P:positive regulation of fibroblast proliferation"/>
    <property type="evidence" value="ECO:0007669"/>
    <property type="project" value="Ensembl"/>
</dbReference>
<dbReference type="GO" id="GO:0002053">
    <property type="term" value="P:positive regulation of mesenchymal cell proliferation"/>
    <property type="evidence" value="ECO:0007669"/>
    <property type="project" value="Ensembl"/>
</dbReference>
<dbReference type="GO" id="GO:0050769">
    <property type="term" value="P:positive regulation of neurogenesis"/>
    <property type="evidence" value="ECO:0007669"/>
    <property type="project" value="Ensembl"/>
</dbReference>
<dbReference type="GO" id="GO:0045944">
    <property type="term" value="P:positive regulation of transcription by RNA polymerase II"/>
    <property type="evidence" value="ECO:0007669"/>
    <property type="project" value="Ensembl"/>
</dbReference>
<dbReference type="CDD" id="cd19345">
    <property type="entry name" value="Wnt_Wnt2"/>
    <property type="match status" value="1"/>
</dbReference>
<dbReference type="FunFam" id="3.30.2460.20:FF:000001">
    <property type="entry name" value="Wnt homolog"/>
    <property type="match status" value="1"/>
</dbReference>
<dbReference type="Gene3D" id="3.30.2460.20">
    <property type="match status" value="1"/>
</dbReference>
<dbReference type="InterPro" id="IPR005817">
    <property type="entry name" value="Wnt"/>
</dbReference>
<dbReference type="InterPro" id="IPR009140">
    <property type="entry name" value="Wnt2"/>
</dbReference>
<dbReference type="InterPro" id="IPR043158">
    <property type="entry name" value="Wnt_C"/>
</dbReference>
<dbReference type="InterPro" id="IPR018161">
    <property type="entry name" value="Wnt_CS"/>
</dbReference>
<dbReference type="PANTHER" id="PTHR12027:SF86">
    <property type="entry name" value="PROTEIN WNT-2"/>
    <property type="match status" value="1"/>
</dbReference>
<dbReference type="PANTHER" id="PTHR12027">
    <property type="entry name" value="WNT RELATED"/>
    <property type="match status" value="1"/>
</dbReference>
<dbReference type="Pfam" id="PF00110">
    <property type="entry name" value="wnt"/>
    <property type="match status" value="1"/>
</dbReference>
<dbReference type="PRINTS" id="PR01842">
    <property type="entry name" value="WNT2PROTEIN"/>
</dbReference>
<dbReference type="PRINTS" id="PR01349">
    <property type="entry name" value="WNTPROTEIN"/>
</dbReference>
<dbReference type="SMART" id="SM00097">
    <property type="entry name" value="WNT1"/>
    <property type="match status" value="1"/>
</dbReference>
<dbReference type="PROSITE" id="PS00246">
    <property type="entry name" value="WNT1"/>
    <property type="match status" value="1"/>
</dbReference>
<keyword id="KW-0217">Developmental protein</keyword>
<keyword id="KW-1015">Disulfide bond</keyword>
<keyword id="KW-0272">Extracellular matrix</keyword>
<keyword id="KW-0325">Glycoprotein</keyword>
<keyword id="KW-0449">Lipoprotein</keyword>
<keyword id="KW-1185">Reference proteome</keyword>
<keyword id="KW-0964">Secreted</keyword>
<keyword id="KW-0732">Signal</keyword>
<keyword id="KW-0879">Wnt signaling pathway</keyword>
<comment type="function">
    <text evidence="1">Ligand for members of the frizzled family of seven transmembrane receptors. Probable developmental protein. May be a signaling molecule which affects the development of discrete regions of tissues. Is likely to signal over only few cell diameters (By similarity).</text>
</comment>
<comment type="subcellular location">
    <subcellularLocation>
        <location evidence="1">Secreted</location>
        <location evidence="1">Extracellular space</location>
        <location evidence="1">Extracellular matrix</location>
    </subcellularLocation>
</comment>
<comment type="PTM">
    <text evidence="2 4">Palmitoleoylation is required for efficient binding to frizzled receptors. Depalmitoleoylation leads to Wnt signaling pathway inhibition.</text>
</comment>
<comment type="similarity">
    <text evidence="6">Belongs to the Wnt family.</text>
</comment>
<evidence type="ECO:0000250" key="1"/>
<evidence type="ECO:0000250" key="2">
    <source>
        <dbReference type="UniProtKB" id="P27467"/>
    </source>
</evidence>
<evidence type="ECO:0000250" key="3">
    <source>
        <dbReference type="UniProtKB" id="P28026"/>
    </source>
</evidence>
<evidence type="ECO:0000250" key="4">
    <source>
        <dbReference type="UniProtKB" id="P56704"/>
    </source>
</evidence>
<evidence type="ECO:0000255" key="5"/>
<evidence type="ECO:0000305" key="6"/>
<protein>
    <recommendedName>
        <fullName>Protein Wnt-2</fullName>
    </recommendedName>
</protein>
<reference key="1">
    <citation type="submission" date="2006-01" db="EMBL/GenBank/DDBJ databases">
        <title>NISC comparative sequencing initiative.</title>
        <authorList>
            <person name="Antonellis A."/>
            <person name="Ayele K."/>
            <person name="Benjamin B."/>
            <person name="Blakesley R.W."/>
            <person name="Boakye A."/>
            <person name="Bouffard G.G."/>
            <person name="Brinkley C."/>
            <person name="Brooks S."/>
            <person name="Chu G."/>
            <person name="Coleman H."/>
            <person name="Engle J."/>
            <person name="Gestole M."/>
            <person name="Greene A."/>
            <person name="Guan X."/>
            <person name="Gupta J."/>
            <person name="Haghighi P."/>
            <person name="Han J."/>
            <person name="Hansen N."/>
            <person name="Ho S.-L."/>
            <person name="Hu P."/>
            <person name="Hunter G."/>
            <person name="Hurle B."/>
            <person name="Idol J.R."/>
            <person name="Kwong P."/>
            <person name="Laric P."/>
            <person name="Larson S."/>
            <person name="Lee-Lin S.-Q."/>
            <person name="Legaspi R."/>
            <person name="Madden M."/>
            <person name="Maduro Q.L."/>
            <person name="Maduro V.B."/>
            <person name="Margulies E.H."/>
            <person name="Masiello C."/>
            <person name="Maskeri B."/>
            <person name="McDowell J."/>
            <person name="Mojidi H.A."/>
            <person name="Mullikin J.C."/>
            <person name="Oestreicher J.S."/>
            <person name="Park M."/>
            <person name="Portnoy M.E."/>
            <person name="Prasad A."/>
            <person name="Puri O."/>
            <person name="Reddix-Dugue N."/>
            <person name="Schandler K."/>
            <person name="Schueler M.G."/>
            <person name="Sison C."/>
            <person name="Stantripop S."/>
            <person name="Stephen E."/>
            <person name="Taye A."/>
            <person name="Thomas J.W."/>
            <person name="Thomas P.J."/>
            <person name="Tsipouri V."/>
            <person name="Ung L."/>
            <person name="Vogt J.L."/>
            <person name="Wetherby K.D."/>
            <person name="Young A."/>
            <person name="Green E.D."/>
        </authorList>
    </citation>
    <scope>NUCLEOTIDE SEQUENCE [LARGE SCALE GENOMIC DNA]</scope>
</reference>
<name>WNT2_RHIFE</name>
<sequence length="360" mass="40387">MNAPVGGIWLWLPLLLTWLSPEVSSSWWYMKATGGSSRVMCDNVPGLVSRQRQLCHRHPDVMRAIGLGVAEWTAECQHQFRQHRWNCNTLDRDHSLFGRVLLRSSRESAFVYAISSAGVVFAVTRACSQGELKSCSCDPKKKGTAKDSKGTFDWGGCSDNIDYGIKFARAFVDAKERKGKDARALMNVHNNRAGRKAVKRFLKQECKCHGVSGSCTLRTCWLAMADFRKTGDYLWRRYNGAIQVVMNQDGTGFTVANKRFKKPTKNDLVYFENSPDYCIRDRDAGSLGTAGRVCNLTSRGMDSCEVMCCGRGYDTSRVTRMTKCECKFHWCCAVRCQDCLEALDVHTCKAPKSADWAAPT</sequence>
<proteinExistence type="inferred from homology"/>
<feature type="signal peptide" evidence="5">
    <location>
        <begin position="1"/>
        <end position="25"/>
    </location>
</feature>
<feature type="chain" id="PRO_0000248067" description="Protein Wnt-2">
    <location>
        <begin position="26"/>
        <end position="360"/>
    </location>
</feature>
<feature type="lipid moiety-binding region" description="O-palmitoleoyl serine; by PORCN" evidence="4">
    <location>
        <position position="212"/>
    </location>
</feature>
<feature type="glycosylation site" description="N-linked (GlcNAc...) asparagine" evidence="5">
    <location>
        <position position="295"/>
    </location>
</feature>
<feature type="disulfide bond" evidence="3">
    <location>
        <begin position="76"/>
        <end position="87"/>
    </location>
</feature>
<feature type="disulfide bond" evidence="3">
    <location>
        <begin position="127"/>
        <end position="135"/>
    </location>
</feature>
<feature type="disulfide bond" evidence="3">
    <location>
        <begin position="137"/>
        <end position="157"/>
    </location>
</feature>
<feature type="disulfide bond" evidence="3">
    <location>
        <begin position="206"/>
        <end position="220"/>
    </location>
</feature>
<feature type="disulfide bond" evidence="3">
    <location>
        <begin position="208"/>
        <end position="215"/>
    </location>
</feature>
<feature type="disulfide bond" evidence="3">
    <location>
        <begin position="278"/>
        <end position="309"/>
    </location>
</feature>
<feature type="disulfide bond" evidence="3">
    <location>
        <begin position="294"/>
        <end position="304"/>
    </location>
</feature>
<feature type="disulfide bond" evidence="3">
    <location>
        <begin position="308"/>
        <end position="348"/>
    </location>
</feature>
<feature type="disulfide bond" evidence="3">
    <location>
        <begin position="324"/>
        <end position="339"/>
    </location>
</feature>
<feature type="disulfide bond" evidence="3">
    <location>
        <begin position="326"/>
        <end position="336"/>
    </location>
</feature>
<feature type="disulfide bond" evidence="3">
    <location>
        <begin position="331"/>
        <end position="332"/>
    </location>
</feature>